<reference key="1">
    <citation type="journal article" date="2000" name="Nucleic Acids Res.">
        <title>Genome sequences of Chlamydia trachomatis MoPn and Chlamydia pneumoniae AR39.</title>
        <authorList>
            <person name="Read T.D."/>
            <person name="Brunham R.C."/>
            <person name="Shen C."/>
            <person name="Gill S.R."/>
            <person name="Heidelberg J.F."/>
            <person name="White O."/>
            <person name="Hickey E.K."/>
            <person name="Peterson J.D."/>
            <person name="Utterback T.R."/>
            <person name="Berry K.J."/>
            <person name="Bass S."/>
            <person name="Linher K.D."/>
            <person name="Weidman J.F."/>
            <person name="Khouri H.M."/>
            <person name="Craven B."/>
            <person name="Bowman C."/>
            <person name="Dodson R.J."/>
            <person name="Gwinn M.L."/>
            <person name="Nelson W.C."/>
            <person name="DeBoy R.T."/>
            <person name="Kolonay J.F."/>
            <person name="McClarty G."/>
            <person name="Salzberg S.L."/>
            <person name="Eisen J.A."/>
            <person name="Fraser C.M."/>
        </authorList>
    </citation>
    <scope>NUCLEOTIDE SEQUENCE [LARGE SCALE GENOMIC DNA]</scope>
    <source>
        <strain>MoPn / Nigg</strain>
    </source>
</reference>
<feature type="chain" id="PRO_0000188041" description="Acyl-[acyl-carrier-protein]--UDP-N-acetylglucosamine O-acyltransferase">
    <location>
        <begin position="1"/>
        <end position="280"/>
    </location>
</feature>
<proteinExistence type="inferred from homology"/>
<comment type="function">
    <text evidence="1">Involved in the biosynthesis of lipid A, a phosphorylated glycolipid that anchors the lipopolysaccharide to the outer membrane of the cell.</text>
</comment>
<comment type="catalytic activity">
    <reaction evidence="1">
        <text>a (3R)-hydroxyacyl-[ACP] + UDP-N-acetyl-alpha-D-glucosamine = a UDP-3-O-[(3R)-3-hydroxyacyl]-N-acetyl-alpha-D-glucosamine + holo-[ACP]</text>
        <dbReference type="Rhea" id="RHEA:67812"/>
        <dbReference type="Rhea" id="RHEA-COMP:9685"/>
        <dbReference type="Rhea" id="RHEA-COMP:9945"/>
        <dbReference type="ChEBI" id="CHEBI:57705"/>
        <dbReference type="ChEBI" id="CHEBI:64479"/>
        <dbReference type="ChEBI" id="CHEBI:78827"/>
        <dbReference type="ChEBI" id="CHEBI:173225"/>
        <dbReference type="EC" id="2.3.1.129"/>
    </reaction>
</comment>
<comment type="pathway">
    <text evidence="1">Glycolipid biosynthesis; lipid IV(A) biosynthesis; lipid IV(A) from (3R)-3-hydroxytetradecanoyl-[acyl-carrier-protein] and UDP-N-acetyl-alpha-D-glucosamine: step 1/6.</text>
</comment>
<comment type="subunit">
    <text evidence="1">Homotrimer.</text>
</comment>
<comment type="subcellular location">
    <subcellularLocation>
        <location evidence="1">Cytoplasm</location>
    </subcellularLocation>
</comment>
<comment type="similarity">
    <text evidence="1">Belongs to the transferase hexapeptide repeat family. LpxA subfamily.</text>
</comment>
<keyword id="KW-0012">Acyltransferase</keyword>
<keyword id="KW-0963">Cytoplasm</keyword>
<keyword id="KW-0441">Lipid A biosynthesis</keyword>
<keyword id="KW-0444">Lipid biosynthesis</keyword>
<keyword id="KW-0443">Lipid metabolism</keyword>
<keyword id="KW-0677">Repeat</keyword>
<keyword id="KW-0808">Transferase</keyword>
<accession>Q9PJL1</accession>
<dbReference type="EC" id="2.3.1.129" evidence="1"/>
<dbReference type="EMBL" id="AE002160">
    <property type="protein sequence ID" value="AAF39620.1"/>
    <property type="molecule type" value="Genomic_DNA"/>
</dbReference>
<dbReference type="PIR" id="G81661">
    <property type="entry name" value="G81661"/>
</dbReference>
<dbReference type="RefSeq" id="WP_010231667.1">
    <property type="nucleotide sequence ID" value="NZ_CP063055.1"/>
</dbReference>
<dbReference type="SMR" id="Q9PJL1"/>
<dbReference type="GeneID" id="1246185"/>
<dbReference type="KEGG" id="cmu:TC_0818"/>
<dbReference type="eggNOG" id="COG1043">
    <property type="taxonomic scope" value="Bacteria"/>
</dbReference>
<dbReference type="HOGENOM" id="CLU_061249_0_0_0"/>
<dbReference type="OrthoDB" id="9807278at2"/>
<dbReference type="UniPathway" id="UPA00359">
    <property type="reaction ID" value="UER00477"/>
</dbReference>
<dbReference type="Proteomes" id="UP000000800">
    <property type="component" value="Chromosome"/>
</dbReference>
<dbReference type="GO" id="GO:0005737">
    <property type="term" value="C:cytoplasm"/>
    <property type="evidence" value="ECO:0007669"/>
    <property type="project" value="UniProtKB-SubCell"/>
</dbReference>
<dbReference type="GO" id="GO:0016020">
    <property type="term" value="C:membrane"/>
    <property type="evidence" value="ECO:0007669"/>
    <property type="project" value="GOC"/>
</dbReference>
<dbReference type="GO" id="GO:0008780">
    <property type="term" value="F:acyl-[acyl-carrier-protein]-UDP-N-acetylglucosamine O-acyltransferase activity"/>
    <property type="evidence" value="ECO:0007669"/>
    <property type="project" value="UniProtKB-UniRule"/>
</dbReference>
<dbReference type="GO" id="GO:0009245">
    <property type="term" value="P:lipid A biosynthetic process"/>
    <property type="evidence" value="ECO:0007669"/>
    <property type="project" value="UniProtKB-UniRule"/>
</dbReference>
<dbReference type="CDD" id="cd03351">
    <property type="entry name" value="LbH_UDP-GlcNAc_AT"/>
    <property type="match status" value="1"/>
</dbReference>
<dbReference type="Gene3D" id="2.160.10.10">
    <property type="entry name" value="Hexapeptide repeat proteins"/>
    <property type="match status" value="1"/>
</dbReference>
<dbReference type="Gene3D" id="1.20.1180.10">
    <property type="entry name" value="Udp N-acetylglucosamine O-acyltransferase, C-terminal domain"/>
    <property type="match status" value="1"/>
</dbReference>
<dbReference type="HAMAP" id="MF_00387">
    <property type="entry name" value="LpxA"/>
    <property type="match status" value="1"/>
</dbReference>
<dbReference type="InterPro" id="IPR029098">
    <property type="entry name" value="Acetyltransf_C"/>
</dbReference>
<dbReference type="InterPro" id="IPR037157">
    <property type="entry name" value="Acetyltransf_C_sf"/>
</dbReference>
<dbReference type="InterPro" id="IPR001451">
    <property type="entry name" value="Hexapep"/>
</dbReference>
<dbReference type="InterPro" id="IPR018357">
    <property type="entry name" value="Hexapep_transf_CS"/>
</dbReference>
<dbReference type="InterPro" id="IPR010137">
    <property type="entry name" value="Lipid_A_LpxA"/>
</dbReference>
<dbReference type="InterPro" id="IPR011004">
    <property type="entry name" value="Trimer_LpxA-like_sf"/>
</dbReference>
<dbReference type="NCBIfam" id="TIGR01852">
    <property type="entry name" value="lipid_A_lpxA"/>
    <property type="match status" value="1"/>
</dbReference>
<dbReference type="NCBIfam" id="NF003657">
    <property type="entry name" value="PRK05289.1"/>
    <property type="match status" value="1"/>
</dbReference>
<dbReference type="PANTHER" id="PTHR43480">
    <property type="entry name" value="ACYL-[ACYL-CARRIER-PROTEIN]--UDP-N-ACETYLGLUCOSAMINE O-ACYLTRANSFERASE"/>
    <property type="match status" value="1"/>
</dbReference>
<dbReference type="PANTHER" id="PTHR43480:SF1">
    <property type="entry name" value="ACYL-[ACYL-CARRIER-PROTEIN]--UDP-N-ACETYLGLUCOSAMINE O-ACYLTRANSFERASE, MITOCHONDRIAL-RELATED"/>
    <property type="match status" value="1"/>
</dbReference>
<dbReference type="Pfam" id="PF13720">
    <property type="entry name" value="Acetyltransf_11"/>
    <property type="match status" value="1"/>
</dbReference>
<dbReference type="Pfam" id="PF00132">
    <property type="entry name" value="Hexapep"/>
    <property type="match status" value="1"/>
</dbReference>
<dbReference type="PIRSF" id="PIRSF000456">
    <property type="entry name" value="UDP-GlcNAc_acltr"/>
    <property type="match status" value="1"/>
</dbReference>
<dbReference type="SUPFAM" id="SSF51161">
    <property type="entry name" value="Trimeric LpxA-like enzymes"/>
    <property type="match status" value="1"/>
</dbReference>
<dbReference type="PROSITE" id="PS00101">
    <property type="entry name" value="HEXAPEP_TRANSFERASES"/>
    <property type="match status" value="1"/>
</dbReference>
<organism>
    <name type="scientific">Chlamydia muridarum (strain MoPn / Nigg)</name>
    <dbReference type="NCBI Taxonomy" id="243161"/>
    <lineage>
        <taxon>Bacteria</taxon>
        <taxon>Pseudomonadati</taxon>
        <taxon>Chlamydiota</taxon>
        <taxon>Chlamydiia</taxon>
        <taxon>Chlamydiales</taxon>
        <taxon>Chlamydiaceae</taxon>
        <taxon>Chlamydia/Chlamydophila group</taxon>
        <taxon>Chlamydia</taxon>
    </lineage>
</organism>
<sequence length="280" mass="30672">MTNIHPTAIVEDGAQIGNNVTIEPYAIVKKNVKLCDDVVVKSYAYIDGFTTIGRGTTIWPSAMIGNKPQDLKFKGEKTFVEIGEHCEIREFAMITSSTFEGTTVSIGNNCLIMPWAHIAHNCSVGNNVVFSTHVQLAGHVQVGDCVTIGSMVGVHQFVRIGSYAMVGAMSGIRRDIPPFTIGTGNPYALGGVNKVGLQRRRVPFETRLALIKTFKRVFRSGESFQDSLGSVLEDFGDVPEVRHFVEFCRQPSKRGIERGIDCEASLDEPIDKKEGAFVES</sequence>
<evidence type="ECO:0000255" key="1">
    <source>
        <dbReference type="HAMAP-Rule" id="MF_00387"/>
    </source>
</evidence>
<name>LPXA_CHLMU</name>
<protein>
    <recommendedName>
        <fullName evidence="1">Acyl-[acyl-carrier-protein]--UDP-N-acetylglucosamine O-acyltransferase</fullName>
        <shortName evidence="1">UDP-N-acetylglucosamine acyltransferase</shortName>
        <ecNumber evidence="1">2.3.1.129</ecNumber>
    </recommendedName>
</protein>
<gene>
    <name evidence="1" type="primary">lpxA</name>
    <name type="ordered locus">TC_0818</name>
</gene>